<name>HEM3_MARSD</name>
<evidence type="ECO:0000255" key="1">
    <source>
        <dbReference type="HAMAP-Rule" id="MF_00260"/>
    </source>
</evidence>
<gene>
    <name evidence="1" type="primary">hemC</name>
    <name type="ordered locus">Desal_0642</name>
</gene>
<reference key="1">
    <citation type="submission" date="2009-06" db="EMBL/GenBank/DDBJ databases">
        <title>Complete sequence of Desulfovibrio salexigens DSM 2638.</title>
        <authorList>
            <consortium name="US DOE Joint Genome Institute"/>
            <person name="Lucas S."/>
            <person name="Copeland A."/>
            <person name="Lapidus A."/>
            <person name="Glavina del Rio T."/>
            <person name="Tice H."/>
            <person name="Bruce D."/>
            <person name="Goodwin L."/>
            <person name="Pitluck S."/>
            <person name="Munk A.C."/>
            <person name="Brettin T."/>
            <person name="Detter J.C."/>
            <person name="Han C."/>
            <person name="Tapia R."/>
            <person name="Larimer F."/>
            <person name="Land M."/>
            <person name="Hauser L."/>
            <person name="Kyrpides N."/>
            <person name="Anderson I."/>
            <person name="Wall J.D."/>
            <person name="Arkin A.P."/>
            <person name="Dehal P."/>
            <person name="Chivian D."/>
            <person name="Giles B."/>
            <person name="Hazen T.C."/>
        </authorList>
    </citation>
    <scope>NUCLEOTIDE SEQUENCE [LARGE SCALE GENOMIC DNA]</scope>
    <source>
        <strain>ATCC 14822 / DSM 2638 / NCIMB 8403 / VKM B-1763</strain>
    </source>
</reference>
<proteinExistence type="inferred from homology"/>
<feature type="chain" id="PRO_1000204649" description="Porphobilinogen deaminase">
    <location>
        <begin position="1"/>
        <end position="308"/>
    </location>
</feature>
<feature type="modified residue" description="S-(dipyrrolylmethanemethyl)cysteine" evidence="1">
    <location>
        <position position="240"/>
    </location>
</feature>
<accession>C6BYB7</accession>
<protein>
    <recommendedName>
        <fullName evidence="1">Porphobilinogen deaminase</fullName>
        <shortName evidence="1">PBG</shortName>
        <ecNumber evidence="1">2.5.1.61</ecNumber>
    </recommendedName>
    <alternativeName>
        <fullName evidence="1">Hydroxymethylbilane synthase</fullName>
        <shortName evidence="1">HMBS</shortName>
    </alternativeName>
    <alternativeName>
        <fullName evidence="1">Pre-uroporphyrinogen synthase</fullName>
    </alternativeName>
</protein>
<sequence>MRKITIATRGSKLALWQANHISDLLREEYPGIEVQLLKIKTKGDKILDVPLAKVGGKGLFVKEIEEALLDGRADLAVHSMKDVPTELPEGLEVGIIPPREAETDTLLSVKYDSLKDLPAGAVVGTSSLRRQSQVLALRDDLKIESLRGNLDTRVGKLLNGEFDAIVVATAGLNRLKLSAPKSEILGPPTFLPAVAQGALGIEYRIEDTEIQDILAFLHDEMTARQVKAERGFLTGLDGGCQVPIAAWSQLESDQVKLTGFVADIDGSSPIRMEKTGPAEDAWDIGLALAEEVLAAGAKEILDRVYDKC</sequence>
<keyword id="KW-0627">Porphyrin biosynthesis</keyword>
<keyword id="KW-1185">Reference proteome</keyword>
<keyword id="KW-0808">Transferase</keyword>
<comment type="function">
    <text evidence="1">Tetrapolymerization of the monopyrrole PBG into the hydroxymethylbilane pre-uroporphyrinogen in several discrete steps.</text>
</comment>
<comment type="catalytic activity">
    <reaction evidence="1">
        <text>4 porphobilinogen + H2O = hydroxymethylbilane + 4 NH4(+)</text>
        <dbReference type="Rhea" id="RHEA:13185"/>
        <dbReference type="ChEBI" id="CHEBI:15377"/>
        <dbReference type="ChEBI" id="CHEBI:28938"/>
        <dbReference type="ChEBI" id="CHEBI:57845"/>
        <dbReference type="ChEBI" id="CHEBI:58126"/>
        <dbReference type="EC" id="2.5.1.61"/>
    </reaction>
</comment>
<comment type="cofactor">
    <cofactor evidence="1">
        <name>dipyrromethane</name>
        <dbReference type="ChEBI" id="CHEBI:60342"/>
    </cofactor>
    <text evidence="1">Binds 1 dipyrromethane group covalently.</text>
</comment>
<comment type="pathway">
    <text evidence="1">Porphyrin-containing compound metabolism; protoporphyrin-IX biosynthesis; coproporphyrinogen-III from 5-aminolevulinate: step 2/4.</text>
</comment>
<comment type="subunit">
    <text evidence="1">Monomer.</text>
</comment>
<comment type="miscellaneous">
    <text evidence="1">The porphobilinogen subunits are added to the dipyrromethane group.</text>
</comment>
<comment type="similarity">
    <text evidence="1">Belongs to the HMBS family.</text>
</comment>
<organism>
    <name type="scientific">Maridesulfovibrio salexigens (strain ATCC 14822 / DSM 2638 / NCIMB 8403 / VKM B-1763)</name>
    <name type="common">Desulfovibrio salexigens</name>
    <dbReference type="NCBI Taxonomy" id="526222"/>
    <lineage>
        <taxon>Bacteria</taxon>
        <taxon>Pseudomonadati</taxon>
        <taxon>Thermodesulfobacteriota</taxon>
        <taxon>Desulfovibrionia</taxon>
        <taxon>Desulfovibrionales</taxon>
        <taxon>Desulfovibrionaceae</taxon>
        <taxon>Maridesulfovibrio</taxon>
    </lineage>
</organism>
<dbReference type="EC" id="2.5.1.61" evidence="1"/>
<dbReference type="EMBL" id="CP001649">
    <property type="protein sequence ID" value="ACS78708.1"/>
    <property type="molecule type" value="Genomic_DNA"/>
</dbReference>
<dbReference type="RefSeq" id="WP_015850527.1">
    <property type="nucleotide sequence ID" value="NC_012881.1"/>
</dbReference>
<dbReference type="SMR" id="C6BYB7"/>
<dbReference type="STRING" id="526222.Desal_0642"/>
<dbReference type="KEGG" id="dsa:Desal_0642"/>
<dbReference type="eggNOG" id="COG0181">
    <property type="taxonomic scope" value="Bacteria"/>
</dbReference>
<dbReference type="HOGENOM" id="CLU_019704_0_2_7"/>
<dbReference type="OrthoDB" id="9810298at2"/>
<dbReference type="UniPathway" id="UPA00251">
    <property type="reaction ID" value="UER00319"/>
</dbReference>
<dbReference type="Proteomes" id="UP000002601">
    <property type="component" value="Chromosome"/>
</dbReference>
<dbReference type="GO" id="GO:0005737">
    <property type="term" value="C:cytoplasm"/>
    <property type="evidence" value="ECO:0007669"/>
    <property type="project" value="TreeGrafter"/>
</dbReference>
<dbReference type="GO" id="GO:0004418">
    <property type="term" value="F:hydroxymethylbilane synthase activity"/>
    <property type="evidence" value="ECO:0007669"/>
    <property type="project" value="UniProtKB-UniRule"/>
</dbReference>
<dbReference type="GO" id="GO:0006782">
    <property type="term" value="P:protoporphyrinogen IX biosynthetic process"/>
    <property type="evidence" value="ECO:0007669"/>
    <property type="project" value="UniProtKB-UniRule"/>
</dbReference>
<dbReference type="CDD" id="cd13646">
    <property type="entry name" value="PBP2_EcHMBS_like"/>
    <property type="match status" value="1"/>
</dbReference>
<dbReference type="FunFam" id="3.40.190.10:FF:000004">
    <property type="entry name" value="Porphobilinogen deaminase"/>
    <property type="match status" value="1"/>
</dbReference>
<dbReference type="FunFam" id="3.40.190.10:FF:000005">
    <property type="entry name" value="Porphobilinogen deaminase"/>
    <property type="match status" value="1"/>
</dbReference>
<dbReference type="Gene3D" id="3.40.190.10">
    <property type="entry name" value="Periplasmic binding protein-like II"/>
    <property type="match status" value="2"/>
</dbReference>
<dbReference type="Gene3D" id="3.30.160.40">
    <property type="entry name" value="Porphobilinogen deaminase, C-terminal domain"/>
    <property type="match status" value="1"/>
</dbReference>
<dbReference type="HAMAP" id="MF_00260">
    <property type="entry name" value="Porphobil_deam"/>
    <property type="match status" value="1"/>
</dbReference>
<dbReference type="InterPro" id="IPR000860">
    <property type="entry name" value="HemC"/>
</dbReference>
<dbReference type="InterPro" id="IPR022419">
    <property type="entry name" value="Porphobilin_deaminase_cofac_BS"/>
</dbReference>
<dbReference type="InterPro" id="IPR022417">
    <property type="entry name" value="Porphobilin_deaminase_N"/>
</dbReference>
<dbReference type="InterPro" id="IPR022418">
    <property type="entry name" value="Porphobilinogen_deaminase_C"/>
</dbReference>
<dbReference type="InterPro" id="IPR036803">
    <property type="entry name" value="Porphobilinogen_deaminase_C_sf"/>
</dbReference>
<dbReference type="NCBIfam" id="TIGR00212">
    <property type="entry name" value="hemC"/>
    <property type="match status" value="1"/>
</dbReference>
<dbReference type="PANTHER" id="PTHR11557">
    <property type="entry name" value="PORPHOBILINOGEN DEAMINASE"/>
    <property type="match status" value="1"/>
</dbReference>
<dbReference type="PANTHER" id="PTHR11557:SF0">
    <property type="entry name" value="PORPHOBILINOGEN DEAMINASE"/>
    <property type="match status" value="1"/>
</dbReference>
<dbReference type="Pfam" id="PF01379">
    <property type="entry name" value="Porphobil_deam"/>
    <property type="match status" value="1"/>
</dbReference>
<dbReference type="Pfam" id="PF03900">
    <property type="entry name" value="Porphobil_deamC"/>
    <property type="match status" value="1"/>
</dbReference>
<dbReference type="PIRSF" id="PIRSF001438">
    <property type="entry name" value="4pyrrol_synth_OHMeBilane_synth"/>
    <property type="match status" value="1"/>
</dbReference>
<dbReference type="PRINTS" id="PR00151">
    <property type="entry name" value="PORPHBDMNASE"/>
</dbReference>
<dbReference type="SUPFAM" id="SSF53850">
    <property type="entry name" value="Periplasmic binding protein-like II"/>
    <property type="match status" value="1"/>
</dbReference>
<dbReference type="SUPFAM" id="SSF54782">
    <property type="entry name" value="Porphobilinogen deaminase (hydroxymethylbilane synthase), C-terminal domain"/>
    <property type="match status" value="1"/>
</dbReference>
<dbReference type="PROSITE" id="PS00533">
    <property type="entry name" value="PORPHOBILINOGEN_DEAM"/>
    <property type="match status" value="1"/>
</dbReference>